<dbReference type="EMBL" id="AF232688">
    <property type="protein sequence ID" value="AAF81674.1"/>
    <property type="molecule type" value="Genomic_DNA"/>
</dbReference>
<dbReference type="EMBL" id="AE014133">
    <property type="protein sequence ID" value="AAN57959.1"/>
    <property type="molecule type" value="Genomic_DNA"/>
</dbReference>
<dbReference type="RefSeq" id="NP_720653.1">
    <property type="nucleotide sequence ID" value="NC_004350.2"/>
</dbReference>
<dbReference type="RefSeq" id="WP_002262031.1">
    <property type="nucleotide sequence ID" value="NC_004350.2"/>
</dbReference>
<dbReference type="SMR" id="Q9KIJ3"/>
<dbReference type="STRING" id="210007.SMU_184"/>
<dbReference type="TCDB" id="3.A.1.15.20">
    <property type="family name" value="the atp-binding cassette (abc) superfamily"/>
</dbReference>
<dbReference type="KEGG" id="smu:SMU_184"/>
<dbReference type="PATRIC" id="fig|210007.7.peg.160"/>
<dbReference type="eggNOG" id="COG0803">
    <property type="taxonomic scope" value="Bacteria"/>
</dbReference>
<dbReference type="HOGENOM" id="CLU_016838_1_1_9"/>
<dbReference type="OrthoDB" id="9793396at2"/>
<dbReference type="PhylomeDB" id="Q9KIJ3"/>
<dbReference type="PHI-base" id="PHI:10237"/>
<dbReference type="Proteomes" id="UP000002512">
    <property type="component" value="Chromosome"/>
</dbReference>
<dbReference type="GO" id="GO:0005886">
    <property type="term" value="C:plasma membrane"/>
    <property type="evidence" value="ECO:0007669"/>
    <property type="project" value="UniProtKB-SubCell"/>
</dbReference>
<dbReference type="GO" id="GO:0046872">
    <property type="term" value="F:metal ion binding"/>
    <property type="evidence" value="ECO:0007669"/>
    <property type="project" value="UniProtKB-KW"/>
</dbReference>
<dbReference type="GO" id="GO:0007155">
    <property type="term" value="P:cell adhesion"/>
    <property type="evidence" value="ECO:0007669"/>
    <property type="project" value="InterPro"/>
</dbReference>
<dbReference type="GO" id="GO:0030001">
    <property type="term" value="P:metal ion transport"/>
    <property type="evidence" value="ECO:0007669"/>
    <property type="project" value="InterPro"/>
</dbReference>
<dbReference type="CDD" id="cd01137">
    <property type="entry name" value="PsaA"/>
    <property type="match status" value="1"/>
</dbReference>
<dbReference type="Gene3D" id="3.40.50.1980">
    <property type="entry name" value="Nitrogenase molybdenum iron protein domain"/>
    <property type="match status" value="2"/>
</dbReference>
<dbReference type="InterPro" id="IPR006129">
    <property type="entry name" value="AdhesinB"/>
</dbReference>
<dbReference type="InterPro" id="IPR050492">
    <property type="entry name" value="Bact_metal-bind_prot9"/>
</dbReference>
<dbReference type="InterPro" id="IPR006128">
    <property type="entry name" value="Lipoprotein_PsaA-like"/>
</dbReference>
<dbReference type="InterPro" id="IPR006127">
    <property type="entry name" value="ZnuA-like"/>
</dbReference>
<dbReference type="NCBIfam" id="NF040928">
    <property type="entry name" value="ABC_lipo_SloC"/>
    <property type="match status" value="1"/>
</dbReference>
<dbReference type="PANTHER" id="PTHR42953">
    <property type="entry name" value="HIGH-AFFINITY ZINC UPTAKE SYSTEM PROTEIN ZNUA-RELATED"/>
    <property type="match status" value="1"/>
</dbReference>
<dbReference type="PANTHER" id="PTHR42953:SF1">
    <property type="entry name" value="METAL-BINDING PROTEIN HI_0362-RELATED"/>
    <property type="match status" value="1"/>
</dbReference>
<dbReference type="Pfam" id="PF01297">
    <property type="entry name" value="ZnuA"/>
    <property type="match status" value="1"/>
</dbReference>
<dbReference type="PRINTS" id="PR00691">
    <property type="entry name" value="ADHESINB"/>
</dbReference>
<dbReference type="PRINTS" id="PR00690">
    <property type="entry name" value="ADHESNFAMILY"/>
</dbReference>
<dbReference type="SUPFAM" id="SSF53807">
    <property type="entry name" value="Helical backbone' metal receptor"/>
    <property type="match status" value="1"/>
</dbReference>
<dbReference type="PROSITE" id="PS51257">
    <property type="entry name" value="PROKAR_LIPOPROTEIN"/>
    <property type="match status" value="1"/>
</dbReference>
<protein>
    <recommendedName>
        <fullName evidence="4">Metal ABC transporter substrate-binding lipoprotein SloC</fullName>
    </recommendedName>
</protein>
<sequence>MKKLSLLLLVCLSLLGLFACTSKKTADKKLTVVATNSIIADITKNIAGNKVVLHSIVPVGRDPHEYEPLPEDVKKTSQADVIFYNGINLENGGNAWFTKLVKNAHKKTDKDYFAVSDSVKTIYLENAKEKGKEDPHAWLDLKNGIIYAKNIMKRLSEKDPKNKSYYQKNFQAYSAKLEKLHKVAKEKISRIPTEKKMIVTSEGCFKYFSKAYDIPSAYIWEINTEEEGTPNQIKALVKKLRKSRVSALFVESSVDDRPMKTVSKDTGIPIAAKIFTDSVAKKGQAGDSYYAMMKWNIDKIANGLSQ</sequence>
<comment type="function">
    <text evidence="1 3">Part of the ATP-binding cassette (ABC) transport system SloABC involved in metal import (By similarity). Binds a metal with high affinity and specificity and delivers it to the membrane permease for translocation into the cytoplasm (By similarity). May act as an adhesin which is involved on adherence to extracellular matrix (PubMed:10899841). It is an important factor in pathogenesis and infection (PubMed:10899841). May contribute to the formation and accumulation of dental plaque (PubMed:10899841).</text>
</comment>
<comment type="subcellular location">
    <subcellularLocation>
        <location evidence="2">Cell membrane</location>
        <topology evidence="2">Lipid-anchor</topology>
    </subcellularLocation>
</comment>
<comment type="similarity">
    <text evidence="4">Belongs to the bacterial solute-binding protein 9 family. Lipoprotein receptor antigen (Lrai) subfamily.</text>
</comment>
<gene>
    <name type="primary">sloC</name>
    <name type="ordered locus">SMU_184</name>
</gene>
<reference key="1">
    <citation type="journal article" date="2000" name="Infect. Immun.">
        <title>Genetic characterization of a Streptococcus mutans LraI family operon and role in virulence.</title>
        <authorList>
            <person name="Kitten T."/>
            <person name="Munro C.L."/>
            <person name="Michalek S.M."/>
            <person name="Macrina F.L."/>
        </authorList>
    </citation>
    <scope>NUCLEOTIDE SEQUENCE [GENOMIC DNA]</scope>
    <scope>FUNCTION</scope>
    <source>
        <strain>ATCC 25175 / DSM 20523 / JCM 5705 / NBRC 13955 / NCIMB 702062 / NCTC 10449</strain>
    </source>
</reference>
<reference key="2">
    <citation type="journal article" date="2002" name="Proc. Natl. Acad. Sci. U.S.A.">
        <title>Genome sequence of Streptococcus mutans UA159, a cariogenic dental pathogen.</title>
        <authorList>
            <person name="Ajdic D.J."/>
            <person name="McShan W.M."/>
            <person name="McLaughlin R.E."/>
            <person name="Savic G."/>
            <person name="Chang J."/>
            <person name="Carson M.B."/>
            <person name="Primeaux C."/>
            <person name="Tian R."/>
            <person name="Kenton S."/>
            <person name="Jia H.G."/>
            <person name="Lin S.P."/>
            <person name="Qian Y."/>
            <person name="Li S."/>
            <person name="Zhu H."/>
            <person name="Najar F.Z."/>
            <person name="Lai H."/>
            <person name="White J."/>
            <person name="Roe B.A."/>
            <person name="Ferretti J.J."/>
        </authorList>
    </citation>
    <scope>NUCLEOTIDE SEQUENCE [LARGE SCALE GENOMIC DNA]</scope>
    <source>
        <strain>ATCC 700610 / UA159</strain>
    </source>
</reference>
<organism>
    <name type="scientific">Streptococcus mutans serotype c (strain ATCC 700610 / UA159)</name>
    <dbReference type="NCBI Taxonomy" id="210007"/>
    <lineage>
        <taxon>Bacteria</taxon>
        <taxon>Bacillati</taxon>
        <taxon>Bacillota</taxon>
        <taxon>Bacilli</taxon>
        <taxon>Lactobacillales</taxon>
        <taxon>Streptococcaceae</taxon>
        <taxon>Streptococcus</taxon>
    </lineage>
</organism>
<name>MTSA_STRMU</name>
<feature type="signal peptide" evidence="2">
    <location>
        <begin position="1"/>
        <end position="19"/>
    </location>
</feature>
<feature type="chain" id="PRO_0000031888" description="Metal ABC transporter substrate-binding lipoprotein SloC">
    <location>
        <begin position="20"/>
        <end position="306"/>
    </location>
</feature>
<feature type="binding site" evidence="1">
    <location>
        <position position="64"/>
    </location>
    <ligand>
        <name>a divalent metal cation</name>
        <dbReference type="ChEBI" id="CHEBI:60240"/>
    </ligand>
</feature>
<feature type="binding site" evidence="1">
    <location>
        <position position="136"/>
    </location>
    <ligand>
        <name>a divalent metal cation</name>
        <dbReference type="ChEBI" id="CHEBI:60240"/>
    </ligand>
</feature>
<feature type="binding site" evidence="1">
    <location>
        <position position="202"/>
    </location>
    <ligand>
        <name>a divalent metal cation</name>
        <dbReference type="ChEBI" id="CHEBI:60240"/>
    </ligand>
</feature>
<feature type="binding site" evidence="1">
    <location>
        <position position="277"/>
    </location>
    <ligand>
        <name>a divalent metal cation</name>
        <dbReference type="ChEBI" id="CHEBI:60240"/>
    </ligand>
</feature>
<feature type="lipid moiety-binding region" description="N-palmitoyl cysteine" evidence="2">
    <location>
        <position position="20"/>
    </location>
</feature>
<feature type="lipid moiety-binding region" description="S-diacylglycerol cysteine" evidence="2">
    <location>
        <position position="20"/>
    </location>
</feature>
<feature type="sequence conflict" description="In Ref. 1; AAF81674." evidence="4" ref="1">
    <original>T</original>
    <variation>A</variation>
    <location>
        <position position="108"/>
    </location>
</feature>
<feature type="sequence conflict" description="In Ref. 1; AAF81674." evidence="4" ref="1">
    <original>N</original>
    <variation>D</variation>
    <location>
        <position position="302"/>
    </location>
</feature>
<proteinExistence type="inferred from homology"/>
<keyword id="KW-1003">Cell membrane</keyword>
<keyword id="KW-0449">Lipoprotein</keyword>
<keyword id="KW-0464">Manganese</keyword>
<keyword id="KW-0472">Membrane</keyword>
<keyword id="KW-0479">Metal-binding</keyword>
<keyword id="KW-0564">Palmitate</keyword>
<keyword id="KW-1185">Reference proteome</keyword>
<keyword id="KW-0732">Signal</keyword>
<keyword id="KW-0813">Transport</keyword>
<accession>Q9KIJ3</accession>
<evidence type="ECO:0000250" key="1">
    <source>
        <dbReference type="UniProtKB" id="P0A4G2"/>
    </source>
</evidence>
<evidence type="ECO:0000255" key="2">
    <source>
        <dbReference type="PROSITE-ProRule" id="PRU00303"/>
    </source>
</evidence>
<evidence type="ECO:0000269" key="3">
    <source>
    </source>
</evidence>
<evidence type="ECO:0000305" key="4"/>